<keyword id="KW-0010">Activator</keyword>
<keyword id="KW-0112">Calmodulin-binding</keyword>
<keyword id="KW-0963">Cytoplasm</keyword>
<keyword id="KW-0221">Differentiation</keyword>
<keyword id="KW-0238">DNA-binding</keyword>
<keyword id="KW-0539">Nucleus</keyword>
<keyword id="KW-0726">Sexual differentiation</keyword>
<keyword id="KW-0804">Transcription</keyword>
<keyword id="KW-0805">Transcription regulation</keyword>
<feature type="chain" id="PRO_0000048672" description="Sex-determining region Y protein">
    <location>
        <begin position="1"/>
        <end position="221"/>
    </location>
</feature>
<feature type="DNA-binding region" description="HMG box" evidence="3">
    <location>
        <begin position="54"/>
        <end position="122"/>
    </location>
</feature>
<accession>Q6TC40</accession>
<organism>
    <name type="scientific">Hydrurga leptonyx</name>
    <name type="common">Leopard seal</name>
    <name type="synonym">Phoca leptonyx</name>
    <dbReference type="NCBI Taxonomy" id="29086"/>
    <lineage>
        <taxon>Eukaryota</taxon>
        <taxon>Metazoa</taxon>
        <taxon>Chordata</taxon>
        <taxon>Craniata</taxon>
        <taxon>Vertebrata</taxon>
        <taxon>Euteleostomi</taxon>
        <taxon>Mammalia</taxon>
        <taxon>Eutheria</taxon>
        <taxon>Laurasiatheria</taxon>
        <taxon>Carnivora</taxon>
        <taxon>Caniformia</taxon>
        <taxon>Pinnipedia</taxon>
        <taxon>Phocidae</taxon>
        <taxon>Monachinae</taxon>
        <taxon>Lobodontini</taxon>
        <taxon>Hydrurga</taxon>
    </lineage>
</organism>
<gene>
    <name type="primary">SRY</name>
    <name type="synonym">TDF</name>
</gene>
<name>SRY_HYDLE</name>
<evidence type="ECO:0000250" key="1">
    <source>
        <dbReference type="UniProtKB" id="P36394"/>
    </source>
</evidence>
<evidence type="ECO:0000250" key="2">
    <source>
        <dbReference type="UniProtKB" id="Q05066"/>
    </source>
</evidence>
<evidence type="ECO:0000255" key="3">
    <source>
        <dbReference type="PROSITE-ProRule" id="PRU00267"/>
    </source>
</evidence>
<evidence type="ECO:0000305" key="4"/>
<dbReference type="EMBL" id="AY424655">
    <property type="protein sequence ID" value="AAR10366.1"/>
    <property type="molecule type" value="Genomic_DNA"/>
</dbReference>
<dbReference type="SMR" id="Q6TC40"/>
<dbReference type="GO" id="GO:0005737">
    <property type="term" value="C:cytoplasm"/>
    <property type="evidence" value="ECO:0007669"/>
    <property type="project" value="UniProtKB-SubCell"/>
</dbReference>
<dbReference type="GO" id="GO:0016607">
    <property type="term" value="C:nuclear speck"/>
    <property type="evidence" value="ECO:0007669"/>
    <property type="project" value="UniProtKB-SubCell"/>
</dbReference>
<dbReference type="GO" id="GO:0005634">
    <property type="term" value="C:nucleus"/>
    <property type="evidence" value="ECO:0000250"/>
    <property type="project" value="UniProtKB"/>
</dbReference>
<dbReference type="GO" id="GO:0005516">
    <property type="term" value="F:calmodulin binding"/>
    <property type="evidence" value="ECO:0007669"/>
    <property type="project" value="UniProtKB-KW"/>
</dbReference>
<dbReference type="GO" id="GO:0001228">
    <property type="term" value="F:DNA-binding transcription activator activity, RNA polymerase II-specific"/>
    <property type="evidence" value="ECO:0007669"/>
    <property type="project" value="TreeGrafter"/>
</dbReference>
<dbReference type="GO" id="GO:0000978">
    <property type="term" value="F:RNA polymerase II cis-regulatory region sequence-specific DNA binding"/>
    <property type="evidence" value="ECO:0007669"/>
    <property type="project" value="TreeGrafter"/>
</dbReference>
<dbReference type="GO" id="GO:0030154">
    <property type="term" value="P:cell differentiation"/>
    <property type="evidence" value="ECO:0007669"/>
    <property type="project" value="UniProtKB-KW"/>
</dbReference>
<dbReference type="GO" id="GO:0030238">
    <property type="term" value="P:male sex determination"/>
    <property type="evidence" value="ECO:0007669"/>
    <property type="project" value="InterPro"/>
</dbReference>
<dbReference type="GO" id="GO:0007548">
    <property type="term" value="P:sex differentiation"/>
    <property type="evidence" value="ECO:0007669"/>
    <property type="project" value="UniProtKB-KW"/>
</dbReference>
<dbReference type="CDD" id="cd22034">
    <property type="entry name" value="HMG-box_SoxA_SRY"/>
    <property type="match status" value="1"/>
</dbReference>
<dbReference type="FunFam" id="1.10.30.10:FF:000002">
    <property type="entry name" value="transcription factor Sox-2"/>
    <property type="match status" value="1"/>
</dbReference>
<dbReference type="Gene3D" id="1.10.30.10">
    <property type="entry name" value="High mobility group box domain"/>
    <property type="match status" value="1"/>
</dbReference>
<dbReference type="InterPro" id="IPR009071">
    <property type="entry name" value="HMG_box_dom"/>
</dbReference>
<dbReference type="InterPro" id="IPR036910">
    <property type="entry name" value="HMG_box_dom_sf"/>
</dbReference>
<dbReference type="InterPro" id="IPR017253">
    <property type="entry name" value="SRY"/>
</dbReference>
<dbReference type="InterPro" id="IPR050140">
    <property type="entry name" value="SRY-related_HMG-box_TF-like"/>
</dbReference>
<dbReference type="PANTHER" id="PTHR10270:SF161">
    <property type="entry name" value="SEX-DETERMINING REGION Y PROTEIN"/>
    <property type="match status" value="1"/>
</dbReference>
<dbReference type="PANTHER" id="PTHR10270">
    <property type="entry name" value="SOX TRANSCRIPTION FACTOR"/>
    <property type="match status" value="1"/>
</dbReference>
<dbReference type="Pfam" id="PF00505">
    <property type="entry name" value="HMG_box"/>
    <property type="match status" value="1"/>
</dbReference>
<dbReference type="PIRSF" id="PIRSF037653">
    <property type="entry name" value="SRY"/>
    <property type="match status" value="1"/>
</dbReference>
<dbReference type="SMART" id="SM00398">
    <property type="entry name" value="HMG"/>
    <property type="match status" value="1"/>
</dbReference>
<dbReference type="SUPFAM" id="SSF47095">
    <property type="entry name" value="HMG-box"/>
    <property type="match status" value="1"/>
</dbReference>
<dbReference type="PROSITE" id="PS50118">
    <property type="entry name" value="HMG_BOX_2"/>
    <property type="match status" value="1"/>
</dbReference>
<sequence>MFGVLNSSDHRAAVQQRNIPAFGRTSFELWTDNPTSNYRCETGGNGRDSGQNRVRRPMNAFMVWSRDQRRRVALENPQMQNSEISKQLGYQWKMLTEAEKWPFFEEAQRLQAMHREKYPDYKYRPRRKALPQNSDKLLPAASSSMLCRQVLVDEKWCPFTYRDSCSRAAHPRMEDQLSSSQPVNIANSLLQQEHHYCSTSLRDSPETLAMHLSADPPFYPK</sequence>
<reference key="1">
    <citation type="submission" date="2003-09" db="EMBL/GenBank/DDBJ databases">
        <title>A phylogeny of the pinnipeds from mitochondrial and single copy nuclear gene sequences.</title>
        <authorList>
            <person name="Kinnear M.W."/>
            <person name="Walker G."/>
            <person name="Amos W."/>
        </authorList>
    </citation>
    <scope>NUCLEOTIDE SEQUENCE [GENOMIC DNA]</scope>
</reference>
<proteinExistence type="inferred from homology"/>
<comment type="function">
    <text evidence="1 2">Transcriptional regulator that controls a genetic switch in male development. It is necessary and sufficient for initiating male sex determination by directing the development of supporting cell precursors (pre-Sertoli cells) as Sertoli rather than granulosa cells. Involved in different aspects of gene regulation including promoter activation or repression. Binds to the DNA consensus sequence 5'-[AT]AACAA[AT]-3'. SRY HMG box recognizes DNA by partial intercalation in the minor groove and promotes DNA bending. Also involved in pre-mRNA splicing (By similarity). In male adult brain involved in the maintenance of motor functions of dopaminergic neurons (By similarity).</text>
</comment>
<comment type="subunit">
    <text evidence="2">Interacts with CALM, EP300, HDAC3, KPNB1, ZNF208 isoform KRAB-O, PARP1, SLC9A3R2 and WT1. The interaction with EP300 modulates its DNA-binding activity. The interaction with KPNB1 is sensitive to dissociation by Ran in the GTP-bound form. Interaction with PARP1 impaired its DNA-binding activity.</text>
</comment>
<comment type="subcellular location">
    <subcellularLocation>
        <location evidence="2">Nucleus speckle</location>
    </subcellularLocation>
    <subcellularLocation>
        <location evidence="2">Cytoplasm</location>
    </subcellularLocation>
    <subcellularLocation>
        <location evidence="2">Nucleus</location>
    </subcellularLocation>
</comment>
<comment type="similarity">
    <text evidence="4">Belongs to the SRY family.</text>
</comment>
<comment type="online information" name="Protein Spotlight">
    <link uri="https://www.proteinspotlight.org/back_issues/080"/>
    <text>The tenuous nature of sex - Issue 80 of March 2007</text>
</comment>
<protein>
    <recommendedName>
        <fullName>Sex-determining region Y protein</fullName>
    </recommendedName>
    <alternativeName>
        <fullName>Testis-determining factor</fullName>
    </alternativeName>
</protein>